<sequence>MVTELPYALDAETPLNPSELNVLKAQYDREGEMVGVQTKFNYAWGLVKSNQRNDQQLGVRLLSDIFRVSPERRRECLYYLALGNYKLGNYGEARRYNDLLLDKEPANLQASNLRSLIDDKVAREGLMGVAILSGVGVAAGVVGAFLLRNARKR</sequence>
<comment type="function">
    <text evidence="1">Has a role in mitochondrial fission. Has a role in outer membrane fission but not matrix separation (By similarity).</text>
</comment>
<comment type="subcellular location">
    <subcellularLocation>
        <location evidence="1">Mitochondrion outer membrane</location>
        <topology evidence="1">Single-pass membrane protein</topology>
    </subcellularLocation>
</comment>
<comment type="domain">
    <text evidence="1">The C-terminus is required for mitochondrial localization, while the N-terminus is necessary for mitochondrial fission.</text>
</comment>
<comment type="similarity">
    <text evidence="3">Belongs to the FIS1 family.</text>
</comment>
<accession>Q4IBU4</accession>
<accession>A0A0E0SND1</accession>
<accession>V6RBA9</accession>
<keyword id="KW-0472">Membrane</keyword>
<keyword id="KW-0496">Mitochondrion</keyword>
<keyword id="KW-1000">Mitochondrion outer membrane</keyword>
<keyword id="KW-1185">Reference proteome</keyword>
<keyword id="KW-0677">Repeat</keyword>
<keyword id="KW-0802">TPR repeat</keyword>
<keyword id="KW-0812">Transmembrane</keyword>
<keyword id="KW-1133">Transmembrane helix</keyword>
<dbReference type="EMBL" id="DS231665">
    <property type="protein sequence ID" value="ESU11252.1"/>
    <property type="molecule type" value="Genomic_DNA"/>
</dbReference>
<dbReference type="EMBL" id="HG970334">
    <property type="protein sequence ID" value="CEF87944.1"/>
    <property type="molecule type" value="Genomic_DNA"/>
</dbReference>
<dbReference type="RefSeq" id="XP_011323828.1">
    <property type="nucleotide sequence ID" value="XM_011325526.1"/>
</dbReference>
<dbReference type="SMR" id="Q4IBU4"/>
<dbReference type="FunCoup" id="Q4IBU4">
    <property type="interactions" value="695"/>
</dbReference>
<dbReference type="STRING" id="229533.Q4IBU4"/>
<dbReference type="GeneID" id="23552501"/>
<dbReference type="KEGG" id="fgr:FGSG_05314"/>
<dbReference type="VEuPathDB" id="FungiDB:FGRAMPH1_01G17599"/>
<dbReference type="eggNOG" id="KOG3364">
    <property type="taxonomic scope" value="Eukaryota"/>
</dbReference>
<dbReference type="HOGENOM" id="CLU_104368_2_0_1"/>
<dbReference type="InParanoid" id="Q4IBU4"/>
<dbReference type="OrthoDB" id="88834at110618"/>
<dbReference type="Proteomes" id="UP000070720">
    <property type="component" value="Chromosome 3"/>
</dbReference>
<dbReference type="GO" id="GO:0005741">
    <property type="term" value="C:mitochondrial outer membrane"/>
    <property type="evidence" value="ECO:0007669"/>
    <property type="project" value="UniProtKB-SubCell"/>
</dbReference>
<dbReference type="GO" id="GO:0005778">
    <property type="term" value="C:peroxisomal membrane"/>
    <property type="evidence" value="ECO:0007669"/>
    <property type="project" value="TreeGrafter"/>
</dbReference>
<dbReference type="GO" id="GO:0000422">
    <property type="term" value="P:autophagy of mitochondrion"/>
    <property type="evidence" value="ECO:0007669"/>
    <property type="project" value="TreeGrafter"/>
</dbReference>
<dbReference type="GO" id="GO:0000266">
    <property type="term" value="P:mitochondrial fission"/>
    <property type="evidence" value="ECO:0007669"/>
    <property type="project" value="InterPro"/>
</dbReference>
<dbReference type="GO" id="GO:0016559">
    <property type="term" value="P:peroxisome fission"/>
    <property type="evidence" value="ECO:0007669"/>
    <property type="project" value="TreeGrafter"/>
</dbReference>
<dbReference type="CDD" id="cd12212">
    <property type="entry name" value="Fis1"/>
    <property type="match status" value="1"/>
</dbReference>
<dbReference type="FunFam" id="1.25.40.10:FF:000179">
    <property type="entry name" value="Mitochondrial fission 1 protein"/>
    <property type="match status" value="1"/>
</dbReference>
<dbReference type="Gene3D" id="1.25.40.10">
    <property type="entry name" value="Tetratricopeptide repeat domain"/>
    <property type="match status" value="1"/>
</dbReference>
<dbReference type="InterPro" id="IPR016543">
    <property type="entry name" value="Fis1"/>
</dbReference>
<dbReference type="InterPro" id="IPR033745">
    <property type="entry name" value="Fis1_cytosol"/>
</dbReference>
<dbReference type="InterPro" id="IPR028061">
    <property type="entry name" value="Fis1_TPR_C"/>
</dbReference>
<dbReference type="InterPro" id="IPR028058">
    <property type="entry name" value="Fis1_TPR_N"/>
</dbReference>
<dbReference type="InterPro" id="IPR011990">
    <property type="entry name" value="TPR-like_helical_dom_sf"/>
</dbReference>
<dbReference type="PANTHER" id="PTHR13247:SF0">
    <property type="entry name" value="MITOCHONDRIAL FISSION 1 PROTEIN"/>
    <property type="match status" value="1"/>
</dbReference>
<dbReference type="PANTHER" id="PTHR13247">
    <property type="entry name" value="TETRATRICOPEPTIDE REPEAT PROTEIN 11 TPR REPEAT PROTEIN 11"/>
    <property type="match status" value="1"/>
</dbReference>
<dbReference type="Pfam" id="PF14853">
    <property type="entry name" value="Fis1_TPR_C"/>
    <property type="match status" value="1"/>
</dbReference>
<dbReference type="Pfam" id="PF14852">
    <property type="entry name" value="Fis1_TPR_N"/>
    <property type="match status" value="1"/>
</dbReference>
<dbReference type="PIRSF" id="PIRSF008835">
    <property type="entry name" value="TPR_repeat_11_Fis1"/>
    <property type="match status" value="1"/>
</dbReference>
<dbReference type="SUPFAM" id="SSF48452">
    <property type="entry name" value="TPR-like"/>
    <property type="match status" value="1"/>
</dbReference>
<feature type="chain" id="PRO_0000256186" description="Mitochondrial fission 1 protein">
    <location>
        <begin position="1"/>
        <end position="153"/>
    </location>
</feature>
<feature type="topological domain" description="Cytoplasmic" evidence="2">
    <location>
        <begin position="1"/>
        <end position="125"/>
    </location>
</feature>
<feature type="transmembrane region" description="Helical" evidence="2">
    <location>
        <begin position="126"/>
        <end position="146"/>
    </location>
</feature>
<feature type="topological domain" description="Mitochondrial intermembrane" evidence="2">
    <location>
        <begin position="147"/>
        <end position="153"/>
    </location>
</feature>
<feature type="repeat" description="TPR">
    <location>
        <begin position="74"/>
        <end position="107"/>
    </location>
</feature>
<protein>
    <recommendedName>
        <fullName>Mitochondrial fission 1 protein</fullName>
    </recommendedName>
</protein>
<organism>
    <name type="scientific">Gibberella zeae (strain ATCC MYA-4620 / CBS 123657 / FGSC 9075 / NRRL 31084 / PH-1)</name>
    <name type="common">Wheat head blight fungus</name>
    <name type="synonym">Fusarium graminearum</name>
    <dbReference type="NCBI Taxonomy" id="229533"/>
    <lineage>
        <taxon>Eukaryota</taxon>
        <taxon>Fungi</taxon>
        <taxon>Dikarya</taxon>
        <taxon>Ascomycota</taxon>
        <taxon>Pezizomycotina</taxon>
        <taxon>Sordariomycetes</taxon>
        <taxon>Hypocreomycetidae</taxon>
        <taxon>Hypocreales</taxon>
        <taxon>Nectriaceae</taxon>
        <taxon>Fusarium</taxon>
    </lineage>
</organism>
<reference key="1">
    <citation type="journal article" date="2007" name="Science">
        <title>The Fusarium graminearum genome reveals a link between localized polymorphism and pathogen specialization.</title>
        <authorList>
            <person name="Cuomo C.A."/>
            <person name="Gueldener U."/>
            <person name="Xu J.-R."/>
            <person name="Trail F."/>
            <person name="Turgeon B.G."/>
            <person name="Di Pietro A."/>
            <person name="Walton J.D."/>
            <person name="Ma L.-J."/>
            <person name="Baker S.E."/>
            <person name="Rep M."/>
            <person name="Adam G."/>
            <person name="Antoniw J."/>
            <person name="Baldwin T."/>
            <person name="Calvo S.E."/>
            <person name="Chang Y.-L."/>
            <person name="DeCaprio D."/>
            <person name="Gale L.R."/>
            <person name="Gnerre S."/>
            <person name="Goswami R.S."/>
            <person name="Hammond-Kosack K."/>
            <person name="Harris L.J."/>
            <person name="Hilburn K."/>
            <person name="Kennell J.C."/>
            <person name="Kroken S."/>
            <person name="Magnuson J.K."/>
            <person name="Mannhaupt G."/>
            <person name="Mauceli E.W."/>
            <person name="Mewes H.-W."/>
            <person name="Mitterbauer R."/>
            <person name="Muehlbauer G."/>
            <person name="Muensterkoetter M."/>
            <person name="Nelson D."/>
            <person name="O'Donnell K."/>
            <person name="Ouellet T."/>
            <person name="Qi W."/>
            <person name="Quesneville H."/>
            <person name="Roncero M.I.G."/>
            <person name="Seong K.-Y."/>
            <person name="Tetko I.V."/>
            <person name="Urban M."/>
            <person name="Waalwijk C."/>
            <person name="Ward T.J."/>
            <person name="Yao J."/>
            <person name="Birren B.W."/>
            <person name="Kistler H.C."/>
        </authorList>
    </citation>
    <scope>NUCLEOTIDE SEQUENCE [LARGE SCALE GENOMIC DNA]</scope>
    <source>
        <strain>ATCC MYA-4620 / CBS 123657 / FGSC 9075 / NRRL 31084 / PH-1</strain>
    </source>
</reference>
<reference key="2">
    <citation type="journal article" date="2010" name="Nature">
        <title>Comparative genomics reveals mobile pathogenicity chromosomes in Fusarium.</title>
        <authorList>
            <person name="Ma L.-J."/>
            <person name="van der Does H.C."/>
            <person name="Borkovich K.A."/>
            <person name="Coleman J.J."/>
            <person name="Daboussi M.-J."/>
            <person name="Di Pietro A."/>
            <person name="Dufresne M."/>
            <person name="Freitag M."/>
            <person name="Grabherr M."/>
            <person name="Henrissat B."/>
            <person name="Houterman P.M."/>
            <person name="Kang S."/>
            <person name="Shim W.-B."/>
            <person name="Woloshuk C."/>
            <person name="Xie X."/>
            <person name="Xu J.-R."/>
            <person name="Antoniw J."/>
            <person name="Baker S.E."/>
            <person name="Bluhm B.H."/>
            <person name="Breakspear A."/>
            <person name="Brown D.W."/>
            <person name="Butchko R.A.E."/>
            <person name="Chapman S."/>
            <person name="Coulson R."/>
            <person name="Coutinho P.M."/>
            <person name="Danchin E.G.J."/>
            <person name="Diener A."/>
            <person name="Gale L.R."/>
            <person name="Gardiner D.M."/>
            <person name="Goff S."/>
            <person name="Hammond-Kosack K.E."/>
            <person name="Hilburn K."/>
            <person name="Hua-Van A."/>
            <person name="Jonkers W."/>
            <person name="Kazan K."/>
            <person name="Kodira C.D."/>
            <person name="Koehrsen M."/>
            <person name="Kumar L."/>
            <person name="Lee Y.-H."/>
            <person name="Li L."/>
            <person name="Manners J.M."/>
            <person name="Miranda-Saavedra D."/>
            <person name="Mukherjee M."/>
            <person name="Park G."/>
            <person name="Park J."/>
            <person name="Park S.-Y."/>
            <person name="Proctor R.H."/>
            <person name="Regev A."/>
            <person name="Ruiz-Roldan M.C."/>
            <person name="Sain D."/>
            <person name="Sakthikumar S."/>
            <person name="Sykes S."/>
            <person name="Schwartz D.C."/>
            <person name="Turgeon B.G."/>
            <person name="Wapinski I."/>
            <person name="Yoder O."/>
            <person name="Young S."/>
            <person name="Zeng Q."/>
            <person name="Zhou S."/>
            <person name="Galagan J."/>
            <person name="Cuomo C.A."/>
            <person name="Kistler H.C."/>
            <person name="Rep M."/>
        </authorList>
    </citation>
    <scope>GENOME REANNOTATION</scope>
    <source>
        <strain>ATCC MYA-4620 / CBS 123657 / FGSC 9075 / NRRL 31084 / PH-1</strain>
    </source>
</reference>
<reference key="3">
    <citation type="journal article" date="2015" name="BMC Genomics">
        <title>The completed genome sequence of the pathogenic ascomycete fungus Fusarium graminearum.</title>
        <authorList>
            <person name="King R."/>
            <person name="Urban M."/>
            <person name="Hammond-Kosack M.C.U."/>
            <person name="Hassani-Pak K."/>
            <person name="Hammond-Kosack K.E."/>
        </authorList>
    </citation>
    <scope>NUCLEOTIDE SEQUENCE [LARGE SCALE GENOMIC DNA]</scope>
    <source>
        <strain>ATCC MYA-4620 / CBS 123657 / FGSC 9075 / NRRL 31084 / PH-1</strain>
    </source>
</reference>
<name>FIS1_GIBZE</name>
<proteinExistence type="inferred from homology"/>
<gene>
    <name type="primary">FIS1</name>
    <name type="ORF">FGRRES_05314</name>
    <name type="ORF">FGSG_05314</name>
</gene>
<evidence type="ECO:0000250" key="1"/>
<evidence type="ECO:0000255" key="2"/>
<evidence type="ECO:0000305" key="3"/>